<proteinExistence type="evidence at protein level"/>
<keyword id="KW-0002">3D-structure</keyword>
<keyword id="KW-0223">Dioxygenase</keyword>
<keyword id="KW-0408">Iron</keyword>
<keyword id="KW-0479">Metal-binding</keyword>
<keyword id="KW-0560">Oxidoreductase</keyword>
<keyword id="KW-1185">Reference proteome</keyword>
<gene>
    <name evidence="5" type="primary">cao-1</name>
    <name type="ORF">NCU07008</name>
</gene>
<reference key="1">
    <citation type="journal article" date="2003" name="Nature">
        <title>The genome sequence of the filamentous fungus Neurospora crassa.</title>
        <authorList>
            <person name="Galagan J.E."/>
            <person name="Calvo S.E."/>
            <person name="Borkovich K.A."/>
            <person name="Selker E.U."/>
            <person name="Read N.D."/>
            <person name="Jaffe D.B."/>
            <person name="FitzHugh W."/>
            <person name="Ma L.-J."/>
            <person name="Smirnov S."/>
            <person name="Purcell S."/>
            <person name="Rehman B."/>
            <person name="Elkins T."/>
            <person name="Engels R."/>
            <person name="Wang S."/>
            <person name="Nielsen C.B."/>
            <person name="Butler J."/>
            <person name="Endrizzi M."/>
            <person name="Qui D."/>
            <person name="Ianakiev P."/>
            <person name="Bell-Pedersen D."/>
            <person name="Nelson M.A."/>
            <person name="Werner-Washburne M."/>
            <person name="Selitrennikoff C.P."/>
            <person name="Kinsey J.A."/>
            <person name="Braun E.L."/>
            <person name="Zelter A."/>
            <person name="Schulte U."/>
            <person name="Kothe G.O."/>
            <person name="Jedd G."/>
            <person name="Mewes H.-W."/>
            <person name="Staben C."/>
            <person name="Marcotte E."/>
            <person name="Greenberg D."/>
            <person name="Roy A."/>
            <person name="Foley K."/>
            <person name="Naylor J."/>
            <person name="Stange-Thomann N."/>
            <person name="Barrett R."/>
            <person name="Gnerre S."/>
            <person name="Kamal M."/>
            <person name="Kamvysselis M."/>
            <person name="Mauceli E.W."/>
            <person name="Bielke C."/>
            <person name="Rudd S."/>
            <person name="Frishman D."/>
            <person name="Krystofova S."/>
            <person name="Rasmussen C."/>
            <person name="Metzenberg R.L."/>
            <person name="Perkins D.D."/>
            <person name="Kroken S."/>
            <person name="Cogoni C."/>
            <person name="Macino G."/>
            <person name="Catcheside D.E.A."/>
            <person name="Li W."/>
            <person name="Pratt R.J."/>
            <person name="Osmani S.A."/>
            <person name="DeSouza C.P.C."/>
            <person name="Glass N.L."/>
            <person name="Orbach M.J."/>
            <person name="Berglund J.A."/>
            <person name="Voelker R."/>
            <person name="Yarden O."/>
            <person name="Plamann M."/>
            <person name="Seiler S."/>
            <person name="Dunlap J.C."/>
            <person name="Radford A."/>
            <person name="Aramayo R."/>
            <person name="Natvig D.O."/>
            <person name="Alex L.A."/>
            <person name="Mannhaupt G."/>
            <person name="Ebbole D.J."/>
            <person name="Freitag M."/>
            <person name="Paulsen I."/>
            <person name="Sachs M.S."/>
            <person name="Lander E.S."/>
            <person name="Nusbaum C."/>
            <person name="Birren B.W."/>
        </authorList>
    </citation>
    <scope>NUCLEOTIDE SEQUENCE [LARGE SCALE GENOMIC DNA]</scope>
    <source>
        <strain>ATCC 24698 / 74-OR23-1A / CBS 708.71 / DSM 1257 / FGSC 987</strain>
    </source>
</reference>
<reference key="2">
    <citation type="journal article" date="2007" name="Mol. Genet. Genomics">
        <title>Identification of the gene responsible for torulene cleavage in the Neurospora carotenoid pathway.</title>
        <authorList>
            <person name="Saelices L."/>
            <person name="Youssar L."/>
            <person name="Holdermann I."/>
            <person name="Al-Babili S."/>
            <person name="Avalos J."/>
        </authorList>
    </citation>
    <scope>IDENTIFICATION</scope>
</reference>
<reference key="3">
    <citation type="journal article" date="2013" name="Eukaryot. Cell">
        <title>The oxygenase CAO-1 of Neurospora crassa is a resveratrol cleavage enzyme.</title>
        <authorList>
            <person name="Diaz-Sanchez V."/>
            <person name="Estrada A.F."/>
            <person name="Limon M.C."/>
            <person name="Al-Babili S."/>
            <person name="Avalos J."/>
        </authorList>
    </citation>
    <scope>FUNCTION</scope>
    <scope>CATALYTIC ACTIVITY</scope>
    <scope>SUBSTRATE SPECIFICITY</scope>
    <scope>INDUCTION</scope>
</reference>
<reference evidence="9 10 11 12 13" key="4">
    <citation type="journal article" date="2017" name="Biochemistry">
        <title>Structure and spectroscopy of alkene-cleaving dioxygenases containing an atypically coordinated non-Heme iron center.</title>
        <authorList>
            <person name="Sui X."/>
            <person name="Weitz A.C."/>
            <person name="Farquhar E.R."/>
            <person name="Badiee M."/>
            <person name="Banerjee S."/>
            <person name="von Lintig J."/>
            <person name="Tochtrop G.P."/>
            <person name="Palczewski K."/>
            <person name="Hendrich M.P."/>
            <person name="Kiser P.D."/>
        </authorList>
    </citation>
    <scope>X-RAY CRYSTALLOGRAPHY (1.85 ANGSTROMS) IN COMPLEX WITH IRON; RESVERATROL AND PICEATANNOL</scope>
    <scope>COFACTOR</scope>
    <scope>FUNCTION</scope>
    <scope>CATALYTIC ACTIVITY</scope>
</reference>
<reference evidence="14" key="5">
    <citation type="journal article" date="2018" name="J. Biol. Inorg. Chem.">
        <title>Preparation and characterization of metal-substituted carotenoid cleavage oxygenases.</title>
        <authorList>
            <person name="Sui X."/>
            <person name="Farquhar E.R."/>
            <person name="Hill H.E."/>
            <person name="von Lintig J."/>
            <person name="Shi W."/>
            <person name="Kiser P.D."/>
        </authorList>
    </citation>
    <scope>X-RAY CRYSTALLOGRAPHY (2.20 ANGSTROMS)</scope>
    <scope>COFACTOR</scope>
</reference>
<accession>Q7S860</accession>
<feature type="chain" id="PRO_0000456845" description="Carotenoid cleavage oxygenase 1">
    <location>
        <begin position="1"/>
        <end position="526"/>
    </location>
</feature>
<feature type="region of interest" description="Disordered" evidence="1">
    <location>
        <begin position="1"/>
        <end position="33"/>
    </location>
</feature>
<feature type="binding site" evidence="3 13">
    <location>
        <position position="133"/>
    </location>
    <ligand>
        <name>piceatannol</name>
        <dbReference type="ChEBI" id="CHEBI:28814"/>
    </ligand>
</feature>
<feature type="binding site" evidence="3 12">
    <location>
        <position position="133"/>
    </location>
    <ligand>
        <name>trans-resveratrol</name>
        <dbReference type="ChEBI" id="CHEBI:45713"/>
    </ligand>
</feature>
<feature type="binding site" evidence="3 13">
    <location>
        <position position="164"/>
    </location>
    <ligand>
        <name>piceatannol</name>
        <dbReference type="ChEBI" id="CHEBI:28814"/>
    </ligand>
</feature>
<feature type="binding site" evidence="3 12">
    <location>
        <position position="164"/>
    </location>
    <ligand>
        <name>trans-resveratrol</name>
        <dbReference type="ChEBI" id="CHEBI:45713"/>
    </ligand>
</feature>
<feature type="binding site" evidence="3 9">
    <location>
        <position position="197"/>
    </location>
    <ligand>
        <name>Fe cation</name>
        <dbReference type="ChEBI" id="CHEBI:24875"/>
        <note>catalytic</note>
    </ligand>
</feature>
<feature type="binding site" evidence="3 9">
    <location>
        <position position="248"/>
    </location>
    <ligand>
        <name>Fe cation</name>
        <dbReference type="ChEBI" id="CHEBI:24875"/>
        <note>catalytic</note>
    </ligand>
</feature>
<feature type="binding site" evidence="3 9">
    <location>
        <position position="313"/>
    </location>
    <ligand>
        <name>Fe cation</name>
        <dbReference type="ChEBI" id="CHEBI:24875"/>
        <note>catalytic</note>
    </ligand>
</feature>
<feature type="binding site" evidence="3 13">
    <location>
        <position position="383"/>
    </location>
    <ligand>
        <name>piceatannol</name>
        <dbReference type="ChEBI" id="CHEBI:28814"/>
    </ligand>
</feature>
<feature type="binding site" evidence="3 12">
    <location>
        <position position="383"/>
    </location>
    <ligand>
        <name>trans-resveratrol</name>
        <dbReference type="ChEBI" id="CHEBI:45713"/>
    </ligand>
</feature>
<feature type="binding site" evidence="3 9">
    <location>
        <position position="510"/>
    </location>
    <ligand>
        <name>Fe cation</name>
        <dbReference type="ChEBI" id="CHEBI:24875"/>
        <note>catalytic</note>
    </ligand>
</feature>
<feature type="helix" evidence="15">
    <location>
        <begin position="40"/>
        <end position="42"/>
    </location>
</feature>
<feature type="helix" evidence="15">
    <location>
        <begin position="44"/>
        <end position="46"/>
    </location>
</feature>
<feature type="strand" evidence="15">
    <location>
        <begin position="52"/>
        <end position="55"/>
    </location>
</feature>
<feature type="strand" evidence="15">
    <location>
        <begin position="59"/>
        <end position="62"/>
    </location>
</feature>
<feature type="strand" evidence="15">
    <location>
        <begin position="70"/>
        <end position="77"/>
    </location>
</feature>
<feature type="helix" evidence="15">
    <location>
        <begin position="90"/>
        <end position="92"/>
    </location>
</feature>
<feature type="strand" evidence="15">
    <location>
        <begin position="95"/>
        <end position="103"/>
    </location>
</feature>
<feature type="strand" evidence="15">
    <location>
        <begin position="106"/>
        <end position="113"/>
    </location>
</feature>
<feature type="helix" evidence="15">
    <location>
        <begin position="117"/>
        <end position="125"/>
    </location>
</feature>
<feature type="helix" evidence="15">
    <location>
        <begin position="136"/>
        <end position="138"/>
    </location>
</feature>
<feature type="strand" evidence="15">
    <location>
        <begin position="151"/>
        <end position="156"/>
    </location>
</feature>
<feature type="strand" evidence="15">
    <location>
        <begin position="159"/>
        <end position="163"/>
    </location>
</feature>
<feature type="strand" evidence="15">
    <location>
        <begin position="170"/>
        <end position="172"/>
    </location>
</feature>
<feature type="turn" evidence="15">
    <location>
        <begin position="174"/>
        <end position="176"/>
    </location>
</feature>
<feature type="strand" evidence="15">
    <location>
        <begin position="179"/>
        <end position="182"/>
    </location>
</feature>
<feature type="turn" evidence="15">
    <location>
        <begin position="185"/>
        <end position="188"/>
    </location>
</feature>
<feature type="turn" evidence="15">
    <location>
        <begin position="202"/>
        <end position="204"/>
    </location>
</feature>
<feature type="strand" evidence="15">
    <location>
        <begin position="207"/>
        <end position="213"/>
    </location>
</feature>
<feature type="strand" evidence="15">
    <location>
        <begin position="221"/>
        <end position="227"/>
    </location>
</feature>
<feature type="strand" evidence="15">
    <location>
        <begin position="233"/>
        <end position="240"/>
    </location>
</feature>
<feature type="strand" evidence="15">
    <location>
        <begin position="254"/>
        <end position="260"/>
    </location>
</feature>
<feature type="strand" evidence="15">
    <location>
        <begin position="262"/>
        <end position="265"/>
    </location>
</feature>
<feature type="helix" evidence="15">
    <location>
        <begin position="268"/>
        <end position="272"/>
    </location>
</feature>
<feature type="strand" evidence="15">
    <location>
        <begin position="286"/>
        <end position="295"/>
    </location>
</feature>
<feature type="helix" evidence="15">
    <location>
        <begin position="298"/>
        <end position="300"/>
    </location>
</feature>
<feature type="strand" evidence="15">
    <location>
        <begin position="302"/>
        <end position="306"/>
    </location>
</feature>
<feature type="strand" evidence="15">
    <location>
        <begin position="310"/>
        <end position="319"/>
    </location>
</feature>
<feature type="strand" evidence="15">
    <location>
        <begin position="325"/>
        <end position="334"/>
    </location>
</feature>
<feature type="turn" evidence="16">
    <location>
        <begin position="350"/>
        <end position="352"/>
    </location>
</feature>
<feature type="strand" evidence="15">
    <location>
        <begin position="355"/>
        <end position="362"/>
    </location>
</feature>
<feature type="strand" evidence="15">
    <location>
        <begin position="375"/>
        <end position="377"/>
    </location>
</feature>
<feature type="strand" evidence="15">
    <location>
        <begin position="382"/>
        <end position="386"/>
    </location>
</feature>
<feature type="helix" evidence="15">
    <location>
        <begin position="389"/>
        <end position="391"/>
    </location>
</feature>
<feature type="strand" evidence="15">
    <location>
        <begin position="398"/>
        <end position="403"/>
    </location>
</feature>
<feature type="helix" evidence="15">
    <location>
        <begin position="413"/>
        <end position="420"/>
    </location>
</feature>
<feature type="strand" evidence="15">
    <location>
        <begin position="422"/>
        <end position="424"/>
    </location>
</feature>
<feature type="strand" evidence="15">
    <location>
        <begin position="429"/>
        <end position="434"/>
    </location>
</feature>
<feature type="turn" evidence="15">
    <location>
        <begin position="435"/>
        <end position="437"/>
    </location>
</feature>
<feature type="strand" evidence="15">
    <location>
        <begin position="440"/>
        <end position="443"/>
    </location>
</feature>
<feature type="strand" evidence="15">
    <location>
        <begin position="449"/>
        <end position="451"/>
    </location>
</feature>
<feature type="strand" evidence="15">
    <location>
        <begin position="455"/>
        <end position="460"/>
    </location>
</feature>
<feature type="strand" evidence="15">
    <location>
        <begin position="468"/>
        <end position="476"/>
    </location>
</feature>
<feature type="turn" evidence="15">
    <location>
        <begin position="477"/>
        <end position="480"/>
    </location>
</feature>
<feature type="strand" evidence="15">
    <location>
        <begin position="481"/>
        <end position="488"/>
    </location>
</feature>
<feature type="strand" evidence="15">
    <location>
        <begin position="491"/>
        <end position="500"/>
    </location>
</feature>
<feature type="strand" evidence="15">
    <location>
        <begin position="511"/>
        <end position="515"/>
    </location>
</feature>
<comment type="function">
    <text evidence="2 3">Dioxygenase that cleaves the interphenyl C-alpha-C-beta double bond of resveratrol to yield 3,5-dihydroxybenzaldehyde and 4-hydroxybenzaldehyde (PubMed:23893079, PubMed:28493664). Also cleaves piceatannol, a compound that differs from resveratrol only in the occurrence of an additional hydroxyl group, which leads to the production of 3,4-dihydroxybenzaldehyde and 3,5-hydroxybenzaldehyde (PubMed:23893079, PubMed:28493664). Is not able to cleave trans-stilbene, 4-monohydroxy-trans-stilbene, 3,5-dihydroxy-trans-stilbene (pinosylvin), trismethoxy-resveratrol, and 3,3',5-trihydroxy-4'-methoxystilbene-3-O-beta-D-glucoside (PubMed:23893079). Is not involved in carotenoid metabolism (PubMed:23893079).</text>
</comment>
<comment type="catalytic activity">
    <reaction evidence="2 3">
        <text>trans-resveratrol + O2 = 3,5-dihydroxybenzaldehyde + 4-hydroxybenzaldehyde</text>
        <dbReference type="Rhea" id="RHEA:73735"/>
        <dbReference type="ChEBI" id="CHEBI:15379"/>
        <dbReference type="ChEBI" id="CHEBI:17597"/>
        <dbReference type="ChEBI" id="CHEBI:45713"/>
        <dbReference type="ChEBI" id="CHEBI:50204"/>
    </reaction>
    <physiologicalReaction direction="left-to-right" evidence="2 3">
        <dbReference type="Rhea" id="RHEA:73736"/>
    </physiologicalReaction>
</comment>
<comment type="catalytic activity">
    <reaction evidence="2 3">
        <text>piceatannol + O2 = 3,5-dihydroxybenzaldehyde + 3,4-dihydroxybenzaldehyde</text>
        <dbReference type="Rhea" id="RHEA:73815"/>
        <dbReference type="ChEBI" id="CHEBI:15379"/>
        <dbReference type="ChEBI" id="CHEBI:28814"/>
        <dbReference type="ChEBI" id="CHEBI:50204"/>
        <dbReference type="ChEBI" id="CHEBI:50205"/>
    </reaction>
    <physiologicalReaction direction="left-to-right" evidence="2 3">
        <dbReference type="Rhea" id="RHEA:73816"/>
    </physiologicalReaction>
</comment>
<comment type="cofactor">
    <cofactor evidence="3 4">
        <name>Fe(2+)</name>
        <dbReference type="ChEBI" id="CHEBI:29033"/>
    </cofactor>
    <text evidence="3 4">Binds 1 Fe(2+) ion per subunit.</text>
</comment>
<comment type="induction">
    <text evidence="2">Expression is induced ba resveratrol but is not dependent on light.</text>
</comment>
<comment type="similarity">
    <text evidence="8">Belongs to the carotenoid oxygenase family.</text>
</comment>
<protein>
    <recommendedName>
        <fullName evidence="6">Carotenoid cleavage oxygenase 1</fullName>
        <shortName evidence="7">CCO cao-1</shortName>
        <ecNumber evidence="2 3">1.13.11.-</ecNumber>
    </recommendedName>
    <alternativeName>
        <fullName evidence="8">Resveratrol cleavage oxygenase cao-1</fullName>
    </alternativeName>
</protein>
<evidence type="ECO:0000256" key="1">
    <source>
        <dbReference type="SAM" id="MobiDB-lite"/>
    </source>
</evidence>
<evidence type="ECO:0000269" key="2">
    <source>
    </source>
</evidence>
<evidence type="ECO:0000269" key="3">
    <source>
    </source>
</evidence>
<evidence type="ECO:0000269" key="4">
    <source>
    </source>
</evidence>
<evidence type="ECO:0000303" key="5">
    <source>
    </source>
</evidence>
<evidence type="ECO:0000303" key="6">
    <source>
    </source>
</evidence>
<evidence type="ECO:0000303" key="7">
    <source>
    </source>
</evidence>
<evidence type="ECO:0000305" key="8"/>
<evidence type="ECO:0007744" key="9">
    <source>
        <dbReference type="PDB" id="5U8X"/>
    </source>
</evidence>
<evidence type="ECO:0007744" key="10">
    <source>
        <dbReference type="PDB" id="5U8Y"/>
    </source>
</evidence>
<evidence type="ECO:0007744" key="11">
    <source>
        <dbReference type="PDB" id="5U8Z"/>
    </source>
</evidence>
<evidence type="ECO:0007744" key="12">
    <source>
        <dbReference type="PDB" id="5U90"/>
    </source>
</evidence>
<evidence type="ECO:0007744" key="13">
    <source>
        <dbReference type="PDB" id="5U97"/>
    </source>
</evidence>
<evidence type="ECO:0007744" key="14">
    <source>
        <dbReference type="PDB" id="6B86"/>
    </source>
</evidence>
<evidence type="ECO:0007829" key="15">
    <source>
        <dbReference type="PDB" id="5U97"/>
    </source>
</evidence>
<evidence type="ECO:0007829" key="16">
    <source>
        <dbReference type="PDB" id="7T8Q"/>
    </source>
</evidence>
<sequence length="526" mass="59427">MAEYVFSDAPKDSHGNGVKDAVPGKQPEELPPAPRYFQGENTAGFMRPVRFEGDITNLEVVGEIPKSIEGTFYRVMPEPHLPSFIPNDPWFNGDGNISGFYFKDGHVDLKQRYVRTEKFVREAEARRSLLGKYRNRYTDLVEFKIRSTANTNIVYWRGQLLALKEDSPPYAMDPETLETFGVYDFDGQLPSLTFTAHPKFDPVTREMVCFGYEAKGDGTRDICYYSFGPDGKIAETVWLVSPVCGMIHDFAVTENFVIFPIIPLVCDVERMKQGGDHWQWDYSIPMYIGVLPRRGAQGSDVKWFEAPHGFAGHVANAFEDDKGHIQLQMAYAKDNVFFWWPDANGKGPRPGEVEAHFANFVLDYQSDKLPLAEPTYLVDDDMEFPRIDDRVATRKHKHTFFCIFDRKPGVTDFEFVMPRAGGGAPMSNGLAHLNHETGDIQRYLPGPRKLTGECIFIPRNSEAAEGDGYVMVLLANYEDMCSELAVLDTKDLTNEVALIKLPVRLRPGLHGNWVDKSDVDGHPAPL</sequence>
<dbReference type="EC" id="1.13.11.-" evidence="2 3"/>
<dbReference type="EMBL" id="CM002239">
    <property type="protein sequence ID" value="EAA32528.1"/>
    <property type="molecule type" value="Genomic_DNA"/>
</dbReference>
<dbReference type="RefSeq" id="XP_961764.1">
    <property type="nucleotide sequence ID" value="XM_956671.2"/>
</dbReference>
<dbReference type="PDB" id="5U8X">
    <property type="method" value="X-ray"/>
    <property type="resolution" value="2.17 A"/>
    <property type="chains" value="A/B/C/D=1-526"/>
</dbReference>
<dbReference type="PDB" id="5U8Y">
    <property type="method" value="X-ray"/>
    <property type="resolution" value="2.50 A"/>
    <property type="chains" value="A/B/C/D=1-526"/>
</dbReference>
<dbReference type="PDB" id="5U8Z">
    <property type="method" value="X-ray"/>
    <property type="resolution" value="1.90 A"/>
    <property type="chains" value="A/B/C/D=1-526"/>
</dbReference>
<dbReference type="PDB" id="5U90">
    <property type="method" value="X-ray"/>
    <property type="resolution" value="1.90 A"/>
    <property type="chains" value="A/B/C/D=1-526"/>
</dbReference>
<dbReference type="PDB" id="5U97">
    <property type="method" value="X-ray"/>
    <property type="resolution" value="1.85 A"/>
    <property type="chains" value="A/B/C/D=1-526"/>
</dbReference>
<dbReference type="PDB" id="6B86">
    <property type="method" value="X-ray"/>
    <property type="resolution" value="2.20 A"/>
    <property type="chains" value="A/B/C/D=1-526"/>
</dbReference>
<dbReference type="PDB" id="7T8P">
    <property type="method" value="X-ray"/>
    <property type="resolution" value="1.90 A"/>
    <property type="chains" value="A/B/C/D=1-526"/>
</dbReference>
<dbReference type="PDB" id="7T8Q">
    <property type="method" value="X-ray"/>
    <property type="resolution" value="2.15 A"/>
    <property type="chains" value="A/B/C/D=1-526"/>
</dbReference>
<dbReference type="PDB" id="8FU2">
    <property type="method" value="X-ray"/>
    <property type="resolution" value="1.90 A"/>
    <property type="chains" value="A/B/C/D=1-526"/>
</dbReference>
<dbReference type="PDB" id="8FU5">
    <property type="method" value="X-ray"/>
    <property type="resolution" value="2.01 A"/>
    <property type="chains" value="A/B/C/D=1-526"/>
</dbReference>
<dbReference type="PDB" id="8SRL">
    <property type="method" value="X-ray"/>
    <property type="resolution" value="2.01 A"/>
    <property type="chains" value="A/B/C/D=1-526"/>
</dbReference>
<dbReference type="PDBsum" id="5U8X"/>
<dbReference type="PDBsum" id="5U8Y"/>
<dbReference type="PDBsum" id="5U8Z"/>
<dbReference type="PDBsum" id="5U90"/>
<dbReference type="PDBsum" id="5U97"/>
<dbReference type="PDBsum" id="6B86"/>
<dbReference type="PDBsum" id="7T8P"/>
<dbReference type="PDBsum" id="7T8Q"/>
<dbReference type="PDBsum" id="8FU2"/>
<dbReference type="PDBsum" id="8FU5"/>
<dbReference type="PDBsum" id="8SRL"/>
<dbReference type="SMR" id="Q7S860"/>
<dbReference type="STRING" id="367110.Q7S860"/>
<dbReference type="PaxDb" id="5141-EFNCRP00000007044"/>
<dbReference type="EnsemblFungi" id="EAA32528">
    <property type="protein sequence ID" value="EAA32528"/>
    <property type="gene ID" value="NCU07008"/>
</dbReference>
<dbReference type="GeneID" id="3877912"/>
<dbReference type="KEGG" id="ncr:NCU07008"/>
<dbReference type="VEuPathDB" id="FungiDB:NCU07008"/>
<dbReference type="HOGENOM" id="CLU_016472_6_2_1"/>
<dbReference type="InParanoid" id="Q7S860"/>
<dbReference type="OMA" id="ASYRNRW"/>
<dbReference type="OrthoDB" id="1069523at2759"/>
<dbReference type="Proteomes" id="UP000001805">
    <property type="component" value="Chromosome 4, Linkage Group IV"/>
</dbReference>
<dbReference type="GO" id="GO:0010436">
    <property type="term" value="F:carotenoid dioxygenase activity"/>
    <property type="evidence" value="ECO:0000318"/>
    <property type="project" value="GO_Central"/>
</dbReference>
<dbReference type="GO" id="GO:0046872">
    <property type="term" value="F:metal ion binding"/>
    <property type="evidence" value="ECO:0007669"/>
    <property type="project" value="UniProtKB-KW"/>
</dbReference>
<dbReference type="GO" id="GO:0016121">
    <property type="term" value="P:carotene catabolic process"/>
    <property type="evidence" value="ECO:0000318"/>
    <property type="project" value="GO_Central"/>
</dbReference>
<dbReference type="InterPro" id="IPR004294">
    <property type="entry name" value="Carotenoid_Oase"/>
</dbReference>
<dbReference type="PANTHER" id="PTHR10543">
    <property type="entry name" value="BETA-CAROTENE DIOXYGENASE"/>
    <property type="match status" value="1"/>
</dbReference>
<dbReference type="PANTHER" id="PTHR10543:SF89">
    <property type="entry name" value="CAROTENOID 9,10(9',10')-CLEAVAGE DIOXYGENASE 1"/>
    <property type="match status" value="1"/>
</dbReference>
<dbReference type="Pfam" id="PF03055">
    <property type="entry name" value="RPE65"/>
    <property type="match status" value="1"/>
</dbReference>
<name>CAO1_NEUCR</name>
<organism>
    <name type="scientific">Neurospora crassa (strain ATCC 24698 / 74-OR23-1A / CBS 708.71 / DSM 1257 / FGSC 987)</name>
    <dbReference type="NCBI Taxonomy" id="367110"/>
    <lineage>
        <taxon>Eukaryota</taxon>
        <taxon>Fungi</taxon>
        <taxon>Dikarya</taxon>
        <taxon>Ascomycota</taxon>
        <taxon>Pezizomycotina</taxon>
        <taxon>Sordariomycetes</taxon>
        <taxon>Sordariomycetidae</taxon>
        <taxon>Sordariales</taxon>
        <taxon>Sordariaceae</taxon>
        <taxon>Neurospora</taxon>
    </lineage>
</organism>